<keyword id="KW-0020">Allergen</keyword>
<keyword id="KW-0204">Cytolysis</keyword>
<keyword id="KW-1015">Disulfide bond</keyword>
<keyword id="KW-0325">Glycoprotein</keyword>
<keyword id="KW-0354">Hemolysis</keyword>
<keyword id="KW-0378">Hydrolase</keyword>
<keyword id="KW-0442">Lipid degradation</keyword>
<keyword id="KW-0443">Lipid metabolism</keyword>
<keyword id="KW-1185">Reference proteome</keyword>
<keyword id="KW-0964">Secreted</keyword>
<keyword id="KW-0732">Signal</keyword>
<sequence length="379" mass="42135">MKFITAILVIFCVYLLSTAGDSKILPLKKLPSKIFGHLKSHVDNTVKKPLKVFGHLKSHVENSVGPLRMNKLTPNCIFGVKSMSMVLFTKNIPDGKYISLDSDLGRDLDLTKTIYFTAHGFISNVNHSLSNRLSRALVEKDYTVFSLDWSDAACTTGGLPLVKLLGYPSAVQNTREIGNLMADYVMSLIDHGASLRNMAFIGHSLGSHVCGFASKKIYESGYGKVPLLFAADPAQPLFQLKQCPDRLCDTDAKLVITLHTSQIGLGYPIGGLDLYFNGGFVQPKCHLDITCAHIRSVLYLINMVEKKCSFPGIPATYKQILNPFSKFPYPNSKTTDCFVMDDSIFNPRRKSLQNLAGGIYYMFVDPDTFCTRKNFNCQR</sequence>
<protein>
    <recommendedName>
        <fullName evidence="4">Phospholipase A1</fullName>
        <shortName evidence="4">PLA1</shortName>
        <ecNumber evidence="2">3.1.1.32</ecNumber>
    </recommendedName>
    <alternativeName>
        <fullName evidence="4">Venom allergen 1</fullName>
    </alternativeName>
</protein>
<feature type="signal peptide" evidence="5">
    <location>
        <begin position="1"/>
        <end position="20"/>
    </location>
</feature>
<feature type="propeptide" id="PRO_0000447046" evidence="4">
    <location>
        <begin position="21"/>
        <end position="73"/>
    </location>
</feature>
<feature type="chain" id="PRO_0000447047" description="Phospholipase A1" evidence="4">
    <location>
        <begin position="74"/>
        <end position="379"/>
    </location>
</feature>
<feature type="active site" description="Nucleophile" evidence="1">
    <location>
        <position position="204"/>
    </location>
</feature>
<feature type="active site" description="Charge relay system" evidence="7">
    <location>
        <position position="232"/>
    </location>
</feature>
<feature type="active site" description="Charge relay system" evidence="7">
    <location>
        <position position="293"/>
    </location>
</feature>
<feature type="glycosylation site" description="N-linked (GlcNAc...) asparagine" evidence="6">
    <location>
        <position position="126"/>
    </location>
</feature>
<feature type="disulfide bond" evidence="1">
    <location>
        <begin position="76"/>
        <end position="154"/>
    </location>
</feature>
<feature type="disulfide bond" evidence="1">
    <location>
        <begin position="243"/>
        <end position="248"/>
    </location>
</feature>
<feature type="disulfide bond" evidence="1">
    <location>
        <begin position="285"/>
        <end position="291"/>
    </location>
</feature>
<reference key="1">
    <citation type="journal article" date="2014" name="PLoS ONE">
        <title>Transcriptome analysis in venom gland of the predatory giant ant Dinoponera quadriceps: insights into the polypeptide toxin arsenal of hymenopterans.</title>
        <authorList>
            <person name="Torres A.F."/>
            <person name="Huang C."/>
            <person name="Chong C.M."/>
            <person name="Leung S.W."/>
            <person name="Prieto-da-Silva A.R."/>
            <person name="Havt A."/>
            <person name="Quinet Y.P."/>
            <person name="Martins A.M."/>
            <person name="Lee S.M."/>
            <person name="Radis-Baptista G."/>
        </authorList>
    </citation>
    <scope>NUCLEOTIDE SEQUENCE [MRNA]</scope>
    <source>
        <tissue>Venom gland</tissue>
    </source>
</reference>
<evidence type="ECO:0000250" key="1">
    <source>
        <dbReference type="UniProtKB" id="A0A0M3KKW3"/>
    </source>
</evidence>
<evidence type="ECO:0000250" key="2">
    <source>
        <dbReference type="UniProtKB" id="P0DMB4"/>
    </source>
</evidence>
<evidence type="ECO:0000250" key="3">
    <source>
        <dbReference type="UniProtKB" id="P0DMB7"/>
    </source>
</evidence>
<evidence type="ECO:0000250" key="4">
    <source>
        <dbReference type="UniProtKB" id="Q68KK0"/>
    </source>
</evidence>
<evidence type="ECO:0000255" key="5"/>
<evidence type="ECO:0000255" key="6">
    <source>
        <dbReference type="PROSITE-ProRule" id="PRU00498"/>
    </source>
</evidence>
<evidence type="ECO:0000255" key="7">
    <source>
        <dbReference type="PROSITE-ProRule" id="PRU10037"/>
    </source>
</evidence>
<evidence type="ECO:0000305" key="8"/>
<evidence type="ECO:0000305" key="9">
    <source>
    </source>
</evidence>
<organism>
    <name type="scientific">Dinoponera quadriceps</name>
    <name type="common">South American ant</name>
    <dbReference type="NCBI Taxonomy" id="609295"/>
    <lineage>
        <taxon>Eukaryota</taxon>
        <taxon>Metazoa</taxon>
        <taxon>Ecdysozoa</taxon>
        <taxon>Arthropoda</taxon>
        <taxon>Hexapoda</taxon>
        <taxon>Insecta</taxon>
        <taxon>Pterygota</taxon>
        <taxon>Neoptera</taxon>
        <taxon>Endopterygota</taxon>
        <taxon>Hymenoptera</taxon>
        <taxon>Apocrita</taxon>
        <taxon>Aculeata</taxon>
        <taxon>Formicoidea</taxon>
        <taxon>Formicidae</taxon>
        <taxon>Ponerinae</taxon>
        <taxon>Ponerini</taxon>
        <taxon>Dinoponera</taxon>
    </lineage>
</organism>
<proteinExistence type="evidence at transcript level"/>
<accession>P0DSI2</accession>
<name>PA1_DINQU</name>
<dbReference type="EC" id="3.1.1.32" evidence="2"/>
<dbReference type="SMR" id="P0DSI2"/>
<dbReference type="ESTHER" id="dinqu-pa1">
    <property type="family name" value="Insect_Phospholipase"/>
</dbReference>
<dbReference type="Proteomes" id="UP000515204">
    <property type="component" value="Unplaced"/>
</dbReference>
<dbReference type="GO" id="GO:0005615">
    <property type="term" value="C:extracellular space"/>
    <property type="evidence" value="ECO:0007669"/>
    <property type="project" value="TreeGrafter"/>
</dbReference>
<dbReference type="GO" id="GO:0008970">
    <property type="term" value="F:phospholipase A1 activity"/>
    <property type="evidence" value="ECO:0007669"/>
    <property type="project" value="UniProtKB-EC"/>
</dbReference>
<dbReference type="GO" id="GO:0017171">
    <property type="term" value="F:serine hydrolase activity"/>
    <property type="evidence" value="ECO:0007669"/>
    <property type="project" value="TreeGrafter"/>
</dbReference>
<dbReference type="GO" id="GO:0031640">
    <property type="term" value="P:killing of cells of another organism"/>
    <property type="evidence" value="ECO:0007669"/>
    <property type="project" value="UniProtKB-KW"/>
</dbReference>
<dbReference type="GO" id="GO:0016042">
    <property type="term" value="P:lipid catabolic process"/>
    <property type="evidence" value="ECO:0007669"/>
    <property type="project" value="UniProtKB-KW"/>
</dbReference>
<dbReference type="Gene3D" id="3.40.50.1820">
    <property type="entry name" value="alpha/beta hydrolase"/>
    <property type="match status" value="1"/>
</dbReference>
<dbReference type="InterPro" id="IPR029058">
    <property type="entry name" value="AB_hydrolase_fold"/>
</dbReference>
<dbReference type="InterPro" id="IPR013818">
    <property type="entry name" value="Lipase"/>
</dbReference>
<dbReference type="InterPro" id="IPR000734">
    <property type="entry name" value="TAG_lipase"/>
</dbReference>
<dbReference type="PANTHER" id="PTHR11610">
    <property type="entry name" value="LIPASE"/>
    <property type="match status" value="1"/>
</dbReference>
<dbReference type="PANTHER" id="PTHR11610:SF173">
    <property type="entry name" value="LIPASE DOMAIN-CONTAINING PROTEIN-RELATED"/>
    <property type="match status" value="1"/>
</dbReference>
<dbReference type="Pfam" id="PF00151">
    <property type="entry name" value="Lipase"/>
    <property type="match status" value="1"/>
</dbReference>
<dbReference type="SUPFAM" id="SSF53474">
    <property type="entry name" value="alpha/beta-Hydrolases"/>
    <property type="match status" value="1"/>
</dbReference>
<comment type="function">
    <text evidence="2 3">Catalyzes the hydrolysis of phosphatidylcholine with phospholipase A1 activity (By similarity). May act as an allergen and induce hemolytic activity (By similarity).</text>
</comment>
<comment type="catalytic activity">
    <reaction evidence="2">
        <text>a 1,2-diacyl-sn-glycero-3-phosphocholine + H2O = a 2-acyl-sn-glycero-3-phosphocholine + a fatty acid + H(+)</text>
        <dbReference type="Rhea" id="RHEA:18689"/>
        <dbReference type="ChEBI" id="CHEBI:15377"/>
        <dbReference type="ChEBI" id="CHEBI:15378"/>
        <dbReference type="ChEBI" id="CHEBI:28868"/>
        <dbReference type="ChEBI" id="CHEBI:57643"/>
        <dbReference type="ChEBI" id="CHEBI:57875"/>
        <dbReference type="EC" id="3.1.1.32"/>
    </reaction>
</comment>
<comment type="subcellular location">
    <subcellularLocation>
        <location evidence="9">Secreted</location>
    </subcellularLocation>
</comment>
<comment type="tissue specificity">
    <text evidence="9">Expressed by the venom gland.</text>
</comment>
<comment type="PTM">
    <text evidence="8">Contains five disulfide bonds.</text>
</comment>
<comment type="allergen">
    <text evidence="4">Causes an allergic reaction in human.</text>
</comment>
<comment type="similarity">
    <text evidence="8">Belongs to the AB hydrolase superfamily. Lipase family.</text>
</comment>
<comment type="online information" name="National Center for Biotechnology Information (NCBI)">
    <link uri="https://www.ncbi.nlm.nih.gov/nuccore/GANS01000019"/>
</comment>